<reference key="1">
    <citation type="journal article" date="2005" name="J. Bacteriol.">
        <title>Insights on evolution of virulence and resistance from the complete genome analysis of an early methicillin-resistant Staphylococcus aureus strain and a biofilm-producing methicillin-resistant Staphylococcus epidermidis strain.</title>
        <authorList>
            <person name="Gill S.R."/>
            <person name="Fouts D.E."/>
            <person name="Archer G.L."/>
            <person name="Mongodin E.F."/>
            <person name="DeBoy R.T."/>
            <person name="Ravel J."/>
            <person name="Paulsen I.T."/>
            <person name="Kolonay J.F."/>
            <person name="Brinkac L.M."/>
            <person name="Beanan M.J."/>
            <person name="Dodson R.J."/>
            <person name="Daugherty S.C."/>
            <person name="Madupu R."/>
            <person name="Angiuoli S.V."/>
            <person name="Durkin A.S."/>
            <person name="Haft D.H."/>
            <person name="Vamathevan J.J."/>
            <person name="Khouri H."/>
            <person name="Utterback T.R."/>
            <person name="Lee C."/>
            <person name="Dimitrov G."/>
            <person name="Jiang L."/>
            <person name="Qin H."/>
            <person name="Weidman J."/>
            <person name="Tran K."/>
            <person name="Kang K.H."/>
            <person name="Hance I.R."/>
            <person name="Nelson K.E."/>
            <person name="Fraser C.M."/>
        </authorList>
    </citation>
    <scope>NUCLEOTIDE SEQUENCE [LARGE SCALE GENOMIC DNA]</scope>
    <source>
        <strain>ATCC 35984 / DSM 28319 / BCRC 17069 / CCUG 31568 / BM 3577 / RP62A</strain>
    </source>
</reference>
<dbReference type="EMBL" id="CP000029">
    <property type="protein sequence ID" value="AAW54135.1"/>
    <property type="molecule type" value="Genomic_DNA"/>
</dbReference>
<dbReference type="RefSeq" id="WP_002439483.1">
    <property type="nucleotide sequence ID" value="NC_002976.3"/>
</dbReference>
<dbReference type="SMR" id="Q5HPV3"/>
<dbReference type="STRING" id="176279.SERP0804"/>
<dbReference type="GeneID" id="58051410"/>
<dbReference type="KEGG" id="ser:SERP0804"/>
<dbReference type="eggNOG" id="COG0228">
    <property type="taxonomic scope" value="Bacteria"/>
</dbReference>
<dbReference type="HOGENOM" id="CLU_100590_5_0_9"/>
<dbReference type="Proteomes" id="UP000000531">
    <property type="component" value="Chromosome"/>
</dbReference>
<dbReference type="GO" id="GO:0005737">
    <property type="term" value="C:cytoplasm"/>
    <property type="evidence" value="ECO:0007669"/>
    <property type="project" value="UniProtKB-ARBA"/>
</dbReference>
<dbReference type="GO" id="GO:0015935">
    <property type="term" value="C:small ribosomal subunit"/>
    <property type="evidence" value="ECO:0007669"/>
    <property type="project" value="TreeGrafter"/>
</dbReference>
<dbReference type="GO" id="GO:0003735">
    <property type="term" value="F:structural constituent of ribosome"/>
    <property type="evidence" value="ECO:0007669"/>
    <property type="project" value="InterPro"/>
</dbReference>
<dbReference type="GO" id="GO:0006412">
    <property type="term" value="P:translation"/>
    <property type="evidence" value="ECO:0007669"/>
    <property type="project" value="UniProtKB-UniRule"/>
</dbReference>
<dbReference type="FunFam" id="3.30.1320.10:FF:000002">
    <property type="entry name" value="30S ribosomal protein S16"/>
    <property type="match status" value="1"/>
</dbReference>
<dbReference type="Gene3D" id="3.30.1320.10">
    <property type="match status" value="1"/>
</dbReference>
<dbReference type="HAMAP" id="MF_00385">
    <property type="entry name" value="Ribosomal_bS16"/>
    <property type="match status" value="1"/>
</dbReference>
<dbReference type="InterPro" id="IPR000307">
    <property type="entry name" value="Ribosomal_bS16"/>
</dbReference>
<dbReference type="InterPro" id="IPR023803">
    <property type="entry name" value="Ribosomal_bS16_dom_sf"/>
</dbReference>
<dbReference type="NCBIfam" id="TIGR00002">
    <property type="entry name" value="S16"/>
    <property type="match status" value="1"/>
</dbReference>
<dbReference type="PANTHER" id="PTHR12919">
    <property type="entry name" value="30S RIBOSOMAL PROTEIN S16"/>
    <property type="match status" value="1"/>
</dbReference>
<dbReference type="PANTHER" id="PTHR12919:SF20">
    <property type="entry name" value="SMALL RIBOSOMAL SUBUNIT PROTEIN BS16M"/>
    <property type="match status" value="1"/>
</dbReference>
<dbReference type="Pfam" id="PF00886">
    <property type="entry name" value="Ribosomal_S16"/>
    <property type="match status" value="1"/>
</dbReference>
<dbReference type="SUPFAM" id="SSF54565">
    <property type="entry name" value="Ribosomal protein S16"/>
    <property type="match status" value="1"/>
</dbReference>
<organism>
    <name type="scientific">Staphylococcus epidermidis (strain ATCC 35984 / DSM 28319 / BCRC 17069 / CCUG 31568 / BM 3577 / RP62A)</name>
    <dbReference type="NCBI Taxonomy" id="176279"/>
    <lineage>
        <taxon>Bacteria</taxon>
        <taxon>Bacillati</taxon>
        <taxon>Bacillota</taxon>
        <taxon>Bacilli</taxon>
        <taxon>Bacillales</taxon>
        <taxon>Staphylococcaceae</taxon>
        <taxon>Staphylococcus</taxon>
    </lineage>
</organism>
<feature type="chain" id="PRO_0000167248" description="Small ribosomal subunit protein bS16">
    <location>
        <begin position="1"/>
        <end position="91"/>
    </location>
</feature>
<proteinExistence type="inferred from homology"/>
<sequence>MAVKIRLTRLGSKRNPFYRIVVADARSPRDGRIIEQLGTYNPAHVNAPEVKIDEELALKWLHDGAKPTDTVHNILSREGILKKFDEQKNAK</sequence>
<name>RS16_STAEQ</name>
<accession>Q5HPV3</accession>
<gene>
    <name evidence="1" type="primary">rpsP</name>
    <name type="ordered locus">SERP0804</name>
</gene>
<protein>
    <recommendedName>
        <fullName evidence="1">Small ribosomal subunit protein bS16</fullName>
    </recommendedName>
    <alternativeName>
        <fullName evidence="2">30S ribosomal protein S16</fullName>
    </alternativeName>
</protein>
<keyword id="KW-1185">Reference proteome</keyword>
<keyword id="KW-0687">Ribonucleoprotein</keyword>
<keyword id="KW-0689">Ribosomal protein</keyword>
<evidence type="ECO:0000255" key="1">
    <source>
        <dbReference type="HAMAP-Rule" id="MF_00385"/>
    </source>
</evidence>
<evidence type="ECO:0000305" key="2"/>
<comment type="similarity">
    <text evidence="1">Belongs to the bacterial ribosomal protein bS16 family.</text>
</comment>